<protein>
    <recommendedName>
        <fullName evidence="1">Arginine repressor</fullName>
    </recommendedName>
</protein>
<evidence type="ECO:0000255" key="1">
    <source>
        <dbReference type="HAMAP-Rule" id="MF_00173"/>
    </source>
</evidence>
<dbReference type="EMBL" id="CP000325">
    <property type="protein sequence ID" value="ABL04147.1"/>
    <property type="molecule type" value="Genomic_DNA"/>
</dbReference>
<dbReference type="RefSeq" id="WP_011739767.1">
    <property type="nucleotide sequence ID" value="NC_008611.1"/>
</dbReference>
<dbReference type="SMR" id="A0PP78"/>
<dbReference type="KEGG" id="mul:MUL_1649"/>
<dbReference type="eggNOG" id="COG1438">
    <property type="taxonomic scope" value="Bacteria"/>
</dbReference>
<dbReference type="HOGENOM" id="CLU_097103_1_1_11"/>
<dbReference type="UniPathway" id="UPA00068"/>
<dbReference type="Proteomes" id="UP000000765">
    <property type="component" value="Chromosome"/>
</dbReference>
<dbReference type="GO" id="GO:0005737">
    <property type="term" value="C:cytoplasm"/>
    <property type="evidence" value="ECO:0007669"/>
    <property type="project" value="UniProtKB-SubCell"/>
</dbReference>
<dbReference type="GO" id="GO:0034618">
    <property type="term" value="F:arginine binding"/>
    <property type="evidence" value="ECO:0007669"/>
    <property type="project" value="InterPro"/>
</dbReference>
<dbReference type="GO" id="GO:0003677">
    <property type="term" value="F:DNA binding"/>
    <property type="evidence" value="ECO:0007669"/>
    <property type="project" value="UniProtKB-KW"/>
</dbReference>
<dbReference type="GO" id="GO:0003700">
    <property type="term" value="F:DNA-binding transcription factor activity"/>
    <property type="evidence" value="ECO:0007669"/>
    <property type="project" value="UniProtKB-UniRule"/>
</dbReference>
<dbReference type="GO" id="GO:0006526">
    <property type="term" value="P:L-arginine biosynthetic process"/>
    <property type="evidence" value="ECO:0007669"/>
    <property type="project" value="UniProtKB-UniPathway"/>
</dbReference>
<dbReference type="GO" id="GO:0051259">
    <property type="term" value="P:protein complex oligomerization"/>
    <property type="evidence" value="ECO:0007669"/>
    <property type="project" value="InterPro"/>
</dbReference>
<dbReference type="GO" id="GO:1900079">
    <property type="term" value="P:regulation of arginine biosynthetic process"/>
    <property type="evidence" value="ECO:0007669"/>
    <property type="project" value="UniProtKB-UniRule"/>
</dbReference>
<dbReference type="FunFam" id="1.10.10.10:FF:000667">
    <property type="entry name" value="Arginine repressor"/>
    <property type="match status" value="1"/>
</dbReference>
<dbReference type="Gene3D" id="3.30.1360.40">
    <property type="match status" value="1"/>
</dbReference>
<dbReference type="Gene3D" id="1.10.10.10">
    <property type="entry name" value="Winged helix-like DNA-binding domain superfamily/Winged helix DNA-binding domain"/>
    <property type="match status" value="1"/>
</dbReference>
<dbReference type="HAMAP" id="MF_00173">
    <property type="entry name" value="Arg_repressor"/>
    <property type="match status" value="1"/>
</dbReference>
<dbReference type="InterPro" id="IPR001669">
    <property type="entry name" value="Arg_repress"/>
</dbReference>
<dbReference type="InterPro" id="IPR020899">
    <property type="entry name" value="Arg_repress_C"/>
</dbReference>
<dbReference type="InterPro" id="IPR036251">
    <property type="entry name" value="Arg_repress_C_sf"/>
</dbReference>
<dbReference type="InterPro" id="IPR020900">
    <property type="entry name" value="Arg_repress_DNA-bd"/>
</dbReference>
<dbReference type="InterPro" id="IPR036388">
    <property type="entry name" value="WH-like_DNA-bd_sf"/>
</dbReference>
<dbReference type="InterPro" id="IPR036390">
    <property type="entry name" value="WH_DNA-bd_sf"/>
</dbReference>
<dbReference type="NCBIfam" id="TIGR01529">
    <property type="entry name" value="argR_whole"/>
    <property type="match status" value="1"/>
</dbReference>
<dbReference type="NCBIfam" id="NF002880">
    <property type="entry name" value="PRK03341.1"/>
    <property type="match status" value="1"/>
</dbReference>
<dbReference type="PANTHER" id="PTHR34471">
    <property type="entry name" value="ARGININE REPRESSOR"/>
    <property type="match status" value="1"/>
</dbReference>
<dbReference type="PANTHER" id="PTHR34471:SF1">
    <property type="entry name" value="ARGININE REPRESSOR"/>
    <property type="match status" value="1"/>
</dbReference>
<dbReference type="Pfam" id="PF01316">
    <property type="entry name" value="Arg_repressor"/>
    <property type="match status" value="1"/>
</dbReference>
<dbReference type="Pfam" id="PF02863">
    <property type="entry name" value="Arg_repressor_C"/>
    <property type="match status" value="1"/>
</dbReference>
<dbReference type="PRINTS" id="PR01467">
    <property type="entry name" value="ARGREPRESSOR"/>
</dbReference>
<dbReference type="SUPFAM" id="SSF55252">
    <property type="entry name" value="C-terminal domain of arginine repressor"/>
    <property type="match status" value="1"/>
</dbReference>
<dbReference type="SUPFAM" id="SSF46785">
    <property type="entry name" value="Winged helix' DNA-binding domain"/>
    <property type="match status" value="1"/>
</dbReference>
<reference key="1">
    <citation type="journal article" date="2007" name="Genome Res.">
        <title>Reductive evolution and niche adaptation inferred from the genome of Mycobacterium ulcerans, the causative agent of Buruli ulcer.</title>
        <authorList>
            <person name="Stinear T.P."/>
            <person name="Seemann T."/>
            <person name="Pidot S."/>
            <person name="Frigui W."/>
            <person name="Reysset G."/>
            <person name="Garnier T."/>
            <person name="Meurice G."/>
            <person name="Simon D."/>
            <person name="Bouchier C."/>
            <person name="Ma L."/>
            <person name="Tichit M."/>
            <person name="Porter J.L."/>
            <person name="Ryan J."/>
            <person name="Johnson P.D.R."/>
            <person name="Davies J.K."/>
            <person name="Jenkin G.A."/>
            <person name="Small P.L.C."/>
            <person name="Jones L.M."/>
            <person name="Tekaia F."/>
            <person name="Laval F."/>
            <person name="Daffe M."/>
            <person name="Parkhill J."/>
            <person name="Cole S.T."/>
        </authorList>
    </citation>
    <scope>NUCLEOTIDE SEQUENCE [LARGE SCALE GENOMIC DNA]</scope>
    <source>
        <strain>Agy99</strain>
    </source>
</reference>
<comment type="function">
    <text evidence="1">Regulates arginine biosynthesis genes.</text>
</comment>
<comment type="pathway">
    <text>Amino-acid biosynthesis; L-arginine biosynthesis [regulation].</text>
</comment>
<comment type="subcellular location">
    <subcellularLocation>
        <location evidence="1">Cytoplasm</location>
    </subcellularLocation>
</comment>
<comment type="similarity">
    <text evidence="1">Belongs to the ArgR family.</text>
</comment>
<feature type="chain" id="PRO_1000023582" description="Arginine repressor">
    <location>
        <begin position="1"/>
        <end position="166"/>
    </location>
</feature>
<gene>
    <name evidence="1" type="primary">argR</name>
    <name type="ordered locus">MUL_1649</name>
</gene>
<name>ARGR_MYCUA</name>
<organism>
    <name type="scientific">Mycobacterium ulcerans (strain Agy99)</name>
    <dbReference type="NCBI Taxonomy" id="362242"/>
    <lineage>
        <taxon>Bacteria</taxon>
        <taxon>Bacillati</taxon>
        <taxon>Actinomycetota</taxon>
        <taxon>Actinomycetes</taxon>
        <taxon>Mycobacteriales</taxon>
        <taxon>Mycobacteriaceae</taxon>
        <taxon>Mycobacterium</taxon>
        <taxon>Mycobacterium ulcerans group</taxon>
    </lineage>
</organism>
<accession>A0PP78</accession>
<keyword id="KW-0028">Amino-acid biosynthesis</keyword>
<keyword id="KW-0055">Arginine biosynthesis</keyword>
<keyword id="KW-0963">Cytoplasm</keyword>
<keyword id="KW-0238">DNA-binding</keyword>
<keyword id="KW-0678">Repressor</keyword>
<keyword id="KW-0804">Transcription</keyword>
<keyword id="KW-0805">Transcription regulation</keyword>
<sequence>MNGAKQAPEISVNRAGRQARIVAILSTESVSSQSELAALLAVQGIEATQATLSRDLEELGAVKLRGADGGVGVYVVPEDGSPVRGVTGGTGRLARLLGELLVSSDASANLAVLRTPPGGAHYLASAIDRAALPYVVGTIAGDDTVFVAAREPMTGAELAIALEKLK</sequence>
<proteinExistence type="inferred from homology"/>